<feature type="peptide" id="PRO_0000398131" description="Potassium channel toxin alpha-KTx 6.17" evidence="4">
    <location>
        <begin position="1"/>
        <end position="34"/>
    </location>
</feature>
<feature type="disulfide bond" evidence="1">
    <location>
        <begin position="3"/>
        <end position="24"/>
    </location>
</feature>
<feature type="disulfide bond" evidence="1">
    <location>
        <begin position="9"/>
        <end position="29"/>
    </location>
</feature>
<feature type="disulfide bond" evidence="1">
    <location>
        <begin position="13"/>
        <end position="31"/>
    </location>
</feature>
<feature type="disulfide bond" evidence="1">
    <location>
        <begin position="19"/>
        <end position="34"/>
    </location>
</feature>
<proteinExistence type="evidence at protein level"/>
<protein>
    <recommendedName>
        <fullName>Potassium channel toxin alpha-KTx 6.17</fullName>
    </recommendedName>
    <alternativeName>
        <fullName evidence="5">Toxin OcyKTx2</fullName>
    </alternativeName>
</protein>
<organism>
    <name type="scientific">Opisthacanthus cayaporum</name>
    <name type="common">South American scorpion</name>
    <dbReference type="NCBI Taxonomy" id="573324"/>
    <lineage>
        <taxon>Eukaryota</taxon>
        <taxon>Metazoa</taxon>
        <taxon>Ecdysozoa</taxon>
        <taxon>Arthropoda</taxon>
        <taxon>Chelicerata</taxon>
        <taxon>Arachnida</taxon>
        <taxon>Scorpiones</taxon>
        <taxon>Iurida</taxon>
        <taxon>Scorpionoidea</taxon>
        <taxon>Hemiscorpiidae</taxon>
        <taxon>Opisthacanthus</taxon>
    </lineage>
</organism>
<comment type="function">
    <text evidence="4">This toxin reversibly blocks Shaker B potassium-channels (expressed in insect Sf9 cells) with a Kd of 96.6 nM, and presents an even better affinity toward hKv1.3 (KCNA3), blocking it with a Kd of 17.7 nM.</text>
</comment>
<comment type="subcellular location">
    <subcellularLocation>
        <location evidence="3">Secreted</location>
    </subcellularLocation>
</comment>
<comment type="tissue specificity">
    <text evidence="3">Expressed by the venom gland.</text>
</comment>
<comment type="domain">
    <text evidence="6">Has the structural arrangement of an alpha-helix connected to antiparallel beta-sheets by disulfide bonds (CS-alpha/beta).</text>
</comment>
<comment type="mass spectrometry">
    <text>Monoisotopic mass.</text>
</comment>
<comment type="mass spectrometry">
    <text>mass also found by MALDI.</text>
</comment>
<comment type="miscellaneous">
    <text>Protein described in PubMed:18502464 elutes at 21.73 minutes, whereas protein described in PubMed:23684923 elutes at 21.22 minutes.</text>
</comment>
<comment type="similarity">
    <text evidence="2">Belongs to the short scorpion toxin superfamily. Potassium channel inhibitor family. Alpha-KTx 06 subfamily.</text>
</comment>
<comment type="caution">
    <text evidence="6">Peptides from PubMed:23684923 and PubMed:18502464 are different since they are different in elution time and mass. They are shown in a single entry until we know the reason of the differences (e.g. sequence or PTMs).</text>
</comment>
<comment type="caution">
    <text evidence="6">Peptide described in PubMed:23684923 is identical to AC P86115 in mass and elution time, but not in sequence (2 amino acids are different).</text>
</comment>
<name>KAX6H_OPICY</name>
<accession>P86116</accession>
<keyword id="KW-0903">Direct protein sequencing</keyword>
<keyword id="KW-1015">Disulfide bond</keyword>
<keyword id="KW-0872">Ion channel impairing toxin</keyword>
<keyword id="KW-0632">Potassium channel impairing toxin</keyword>
<keyword id="KW-0964">Secreted</keyword>
<keyword id="KW-0800">Toxin</keyword>
<dbReference type="SMR" id="P86116"/>
<dbReference type="GO" id="GO:0005576">
    <property type="term" value="C:extracellular region"/>
    <property type="evidence" value="ECO:0007669"/>
    <property type="project" value="UniProtKB-SubCell"/>
</dbReference>
<dbReference type="GO" id="GO:0008200">
    <property type="term" value="F:ion channel inhibitor activity"/>
    <property type="evidence" value="ECO:0007669"/>
    <property type="project" value="InterPro"/>
</dbReference>
<dbReference type="GO" id="GO:0015459">
    <property type="term" value="F:potassium channel regulator activity"/>
    <property type="evidence" value="ECO:0007669"/>
    <property type="project" value="UniProtKB-KW"/>
</dbReference>
<dbReference type="GO" id="GO:0090729">
    <property type="term" value="F:toxin activity"/>
    <property type="evidence" value="ECO:0007669"/>
    <property type="project" value="UniProtKB-KW"/>
</dbReference>
<dbReference type="Gene3D" id="3.30.30.10">
    <property type="entry name" value="Knottin, scorpion toxin-like"/>
    <property type="match status" value="1"/>
</dbReference>
<dbReference type="InterPro" id="IPR036574">
    <property type="entry name" value="Scorpion_toxin-like_sf"/>
</dbReference>
<dbReference type="InterPro" id="IPR001947">
    <property type="entry name" value="Scorpion_toxinS_K_inh"/>
</dbReference>
<dbReference type="Pfam" id="PF00451">
    <property type="entry name" value="Toxin_2"/>
    <property type="match status" value="1"/>
</dbReference>
<dbReference type="SUPFAM" id="SSF57095">
    <property type="entry name" value="Scorpion toxin-like"/>
    <property type="match status" value="1"/>
</dbReference>
<dbReference type="PROSITE" id="PS01138">
    <property type="entry name" value="SCORP_SHORT_TOXIN"/>
    <property type="match status" value="1"/>
</dbReference>
<evidence type="ECO:0000250" key="1">
    <source>
        <dbReference type="UniProtKB" id="Q10726"/>
    </source>
</evidence>
<evidence type="ECO:0000255" key="2"/>
<evidence type="ECO:0000269" key="3">
    <source>
    </source>
</evidence>
<evidence type="ECO:0000269" key="4">
    <source>
    </source>
</evidence>
<evidence type="ECO:0000303" key="5">
    <source>
    </source>
</evidence>
<evidence type="ECO:0000305" key="6"/>
<reference key="1">
    <citation type="journal article" date="2013" name="Peptides">
        <title>OcyKTx2, a new K-channel toxin characterized from the venom of the scorpion Opisthacanthus cayaporum.</title>
        <authorList>
            <person name="Schwartz E.F."/>
            <person name="Bartok A."/>
            <person name="Schwartz C.A."/>
            <person name="Papp F."/>
            <person name="Gomez-Lagunas F."/>
            <person name="Panyi G."/>
            <person name="Possani L.D."/>
        </authorList>
    </citation>
    <scope>PROTEIN SEQUENCE</scope>
    <scope>FUNCTION</scope>
    <scope>MASS SPECTROMETRY</scope>
    <source>
        <tissue>Venom</tissue>
    </source>
</reference>
<reference key="2">
    <citation type="journal article" date="2008" name="Toxicon">
        <title>Mass spectrometry analysis, amino acid sequence and biological activity of venom components from the Brazilian scorpion Opisthacanthus cayaporum.</title>
        <authorList>
            <person name="Schwartz E.F."/>
            <person name="Camargos T.S."/>
            <person name="Zamudio F.Z."/>
            <person name="Silva L.P."/>
            <person name="Bloch C. Jr."/>
            <person name="Caixeta F."/>
            <person name="Schwartz C.A."/>
            <person name="Possani L.D."/>
        </authorList>
    </citation>
    <scope>PROTEIN SEQUENCE OF 1-31</scope>
    <scope>MASS SPECTROMETRY</scope>
    <source>
        <tissue>Venom</tissue>
    </source>
</reference>
<sequence>IRCQGSNQCYGHCREKTGCMNGKCINRVCKCYGC</sequence>